<feature type="chain" id="PRO_0000182033" description="Probable phosphopantothenoylcysteine decarboxylase">
    <location>
        <begin position="1"/>
        <end position="201"/>
    </location>
</feature>
<feature type="active site" description="Proton donor" evidence="1">
    <location>
        <position position="167"/>
    </location>
</feature>
<feature type="binding site" evidence="1">
    <location>
        <begin position="20"/>
        <end position="22"/>
    </location>
    <ligand>
        <name>FMN</name>
        <dbReference type="ChEBI" id="CHEBI:58210"/>
    </ligand>
</feature>
<feature type="binding site" evidence="1">
    <location>
        <begin position="45"/>
        <end position="47"/>
    </location>
    <ligand>
        <name>FMN</name>
        <dbReference type="ChEBI" id="CHEBI:58210"/>
    </ligand>
</feature>
<feature type="binding site" evidence="1">
    <location>
        <begin position="98"/>
        <end position="101"/>
    </location>
    <ligand>
        <name>FMN</name>
        <dbReference type="ChEBI" id="CHEBI:58210"/>
    </ligand>
</feature>
<feature type="binding site" evidence="1">
    <location>
        <position position="132"/>
    </location>
    <ligand>
        <name>FMN</name>
        <dbReference type="ChEBI" id="CHEBI:58210"/>
    </ligand>
</feature>
<feature type="binding site" evidence="1">
    <location>
        <position position="134"/>
    </location>
    <ligand>
        <name>substrate</name>
    </ligand>
</feature>
<feature type="binding site" evidence="1">
    <location>
        <begin position="164"/>
        <end position="166"/>
    </location>
    <ligand>
        <name>substrate</name>
    </ligand>
</feature>
<feature type="binding site" evidence="1">
    <location>
        <position position="175"/>
    </location>
    <ligand>
        <name>substrate</name>
    </ligand>
</feature>
<proteinExistence type="evidence at transcript level"/>
<keyword id="KW-0173">Coenzyme A biosynthesis</keyword>
<keyword id="KW-0210">Decarboxylase</keyword>
<keyword id="KW-0285">Flavoprotein</keyword>
<keyword id="KW-0288">FMN</keyword>
<keyword id="KW-0341">Growth regulation</keyword>
<keyword id="KW-0456">Lyase</keyword>
<keyword id="KW-1185">Reference proteome</keyword>
<keyword id="KW-0346">Stress response</keyword>
<reference key="1">
    <citation type="journal article" date="1999" name="Plant J.">
        <title>Arabidopsis thaliana AtHAL3: a flavoprotein related to salt and osmotic tolerance and plant growth.</title>
        <authorList>
            <person name="Espinosa-Ruiz A."/>
            <person name="Belles J.M."/>
            <person name="Serrano R."/>
            <person name="Culianez-Macia F.A."/>
        </authorList>
    </citation>
    <scope>NUCLEOTIDE SEQUENCE [GENOMIC DNA]</scope>
    <scope>TISSUE SPECIFICITY</scope>
    <scope>INDUCTION</scope>
    <source>
        <strain>cv. Columbia</strain>
    </source>
</reference>
<reference key="2">
    <citation type="journal article" date="2000" name="Nature">
        <title>Sequence and analysis of chromosome 1 of the plant Arabidopsis thaliana.</title>
        <authorList>
            <person name="Theologis A."/>
            <person name="Ecker J.R."/>
            <person name="Palm C.J."/>
            <person name="Federspiel N.A."/>
            <person name="Kaul S."/>
            <person name="White O."/>
            <person name="Alonso J."/>
            <person name="Altafi H."/>
            <person name="Araujo R."/>
            <person name="Bowman C.L."/>
            <person name="Brooks S.Y."/>
            <person name="Buehler E."/>
            <person name="Chan A."/>
            <person name="Chao Q."/>
            <person name="Chen H."/>
            <person name="Cheuk R.F."/>
            <person name="Chin C.W."/>
            <person name="Chung M.K."/>
            <person name="Conn L."/>
            <person name="Conway A.B."/>
            <person name="Conway A.R."/>
            <person name="Creasy T.H."/>
            <person name="Dewar K."/>
            <person name="Dunn P."/>
            <person name="Etgu P."/>
            <person name="Feldblyum T.V."/>
            <person name="Feng J.-D."/>
            <person name="Fong B."/>
            <person name="Fujii C.Y."/>
            <person name="Gill J.E."/>
            <person name="Goldsmith A.D."/>
            <person name="Haas B."/>
            <person name="Hansen N.F."/>
            <person name="Hughes B."/>
            <person name="Huizar L."/>
            <person name="Hunter J.L."/>
            <person name="Jenkins J."/>
            <person name="Johnson-Hopson C."/>
            <person name="Khan S."/>
            <person name="Khaykin E."/>
            <person name="Kim C.J."/>
            <person name="Koo H.L."/>
            <person name="Kremenetskaia I."/>
            <person name="Kurtz D.B."/>
            <person name="Kwan A."/>
            <person name="Lam B."/>
            <person name="Langin-Hooper S."/>
            <person name="Lee A."/>
            <person name="Lee J.M."/>
            <person name="Lenz C.A."/>
            <person name="Li J.H."/>
            <person name="Li Y.-P."/>
            <person name="Lin X."/>
            <person name="Liu S.X."/>
            <person name="Liu Z.A."/>
            <person name="Luros J.S."/>
            <person name="Maiti R."/>
            <person name="Marziali A."/>
            <person name="Militscher J."/>
            <person name="Miranda M."/>
            <person name="Nguyen M."/>
            <person name="Nierman W.C."/>
            <person name="Osborne B.I."/>
            <person name="Pai G."/>
            <person name="Peterson J."/>
            <person name="Pham P.K."/>
            <person name="Rizzo M."/>
            <person name="Rooney T."/>
            <person name="Rowley D."/>
            <person name="Sakano H."/>
            <person name="Salzberg S.L."/>
            <person name="Schwartz J.R."/>
            <person name="Shinn P."/>
            <person name="Southwick A.M."/>
            <person name="Sun H."/>
            <person name="Tallon L.J."/>
            <person name="Tambunga G."/>
            <person name="Toriumi M.J."/>
            <person name="Town C.D."/>
            <person name="Utterback T."/>
            <person name="Van Aken S."/>
            <person name="Vaysberg M."/>
            <person name="Vysotskaia V.S."/>
            <person name="Walker M."/>
            <person name="Wu D."/>
            <person name="Yu G."/>
            <person name="Fraser C.M."/>
            <person name="Venter J.C."/>
            <person name="Davis R.W."/>
        </authorList>
    </citation>
    <scope>NUCLEOTIDE SEQUENCE [LARGE SCALE GENOMIC DNA]</scope>
    <source>
        <strain>cv. Columbia</strain>
    </source>
</reference>
<reference key="3">
    <citation type="journal article" date="2017" name="Plant J.">
        <title>Araport11: a complete reannotation of the Arabidopsis thaliana reference genome.</title>
        <authorList>
            <person name="Cheng C.Y."/>
            <person name="Krishnakumar V."/>
            <person name="Chan A.P."/>
            <person name="Thibaud-Nissen F."/>
            <person name="Schobel S."/>
            <person name="Town C.D."/>
        </authorList>
    </citation>
    <scope>GENOME REANNOTATION</scope>
    <source>
        <strain>cv. Columbia</strain>
    </source>
</reference>
<reference key="4">
    <citation type="journal article" date="2006" name="Plant Physiol.">
        <title>An Arabidopsis mutant impaired in coenzyme A biosynthesis is sugar dependent for seedling establishment.</title>
        <authorList>
            <person name="Rubio S."/>
            <person name="Larson T.R."/>
            <person name="Gonzalez-Guzman M."/>
            <person name="Alejandro S."/>
            <person name="Graham I.A."/>
            <person name="Serrano R."/>
            <person name="Rodriguez P.L."/>
        </authorList>
    </citation>
    <scope>FUNCTION</scope>
    <scope>DISRUPTION PHENOTYPE</scope>
</reference>
<sequence>MNMEVDTVTRKPRILLAASGSVASIKFSNLCHCFSEWAEVKAVASKSSLNFVDKPSLPQNVTLYTDEDEWSSWNKIGDPVLHIELRRWADVMIIAPLSANTLAKIAGGLCDNLLTCIVRAWDYSKPLFVAPAMNTLMWNNPFTERHLVLLDELGITLIPPIKKKLACGDYGNGAMAEPSLIYSTVRLFWESQARKQRDGTS</sequence>
<dbReference type="EC" id="4.1.1.36"/>
<dbReference type="EMBL" id="U80192">
    <property type="protein sequence ID" value="AAB53106.1"/>
    <property type="molecule type" value="Genomic_DNA"/>
</dbReference>
<dbReference type="EMBL" id="AC020889">
    <property type="protein sequence ID" value="AAF79709.1"/>
    <property type="status" value="ALT_SEQ"/>
    <property type="molecule type" value="Genomic_DNA"/>
</dbReference>
<dbReference type="EMBL" id="CP002684">
    <property type="protein sequence ID" value="AEE32325.1"/>
    <property type="molecule type" value="Genomic_DNA"/>
</dbReference>
<dbReference type="RefSeq" id="NP_973994.1">
    <property type="nucleotide sequence ID" value="NM_202265.3"/>
</dbReference>
<dbReference type="SMR" id="P94063"/>
<dbReference type="BioGRID" id="30426">
    <property type="interactions" value="1"/>
</dbReference>
<dbReference type="FunCoup" id="P94063">
    <property type="interactions" value="2355"/>
</dbReference>
<dbReference type="STRING" id="3702.P94063"/>
<dbReference type="PaxDb" id="3702-AT1G48605.1"/>
<dbReference type="ProteomicsDB" id="230296"/>
<dbReference type="EnsemblPlants" id="AT1G48605.1">
    <property type="protein sequence ID" value="AT1G48605.1"/>
    <property type="gene ID" value="AT1G48605"/>
</dbReference>
<dbReference type="GeneID" id="2745818"/>
<dbReference type="Gramene" id="AT1G48605.1">
    <property type="protein sequence ID" value="AT1G48605.1"/>
    <property type="gene ID" value="AT1G48605"/>
</dbReference>
<dbReference type="KEGG" id="ath:AT1G48605"/>
<dbReference type="Araport" id="AT1G48605"/>
<dbReference type="TAIR" id="AT1G48605">
    <property type="gene designation" value="ATHAL3B"/>
</dbReference>
<dbReference type="eggNOG" id="KOG0672">
    <property type="taxonomic scope" value="Eukaryota"/>
</dbReference>
<dbReference type="HOGENOM" id="CLU_033319_3_2_1"/>
<dbReference type="InParanoid" id="P94063"/>
<dbReference type="OMA" id="DQWGWSE"/>
<dbReference type="OrthoDB" id="1532798at2759"/>
<dbReference type="PhylomeDB" id="P94063"/>
<dbReference type="BioCyc" id="ARA:AT1G48605-MONOMER"/>
<dbReference type="UniPathway" id="UPA00241">
    <property type="reaction ID" value="UER00354"/>
</dbReference>
<dbReference type="PRO" id="PR:P94063"/>
<dbReference type="Proteomes" id="UP000006548">
    <property type="component" value="Chromosome 1"/>
</dbReference>
<dbReference type="ExpressionAtlas" id="P94063">
    <property type="expression patterns" value="baseline and differential"/>
</dbReference>
<dbReference type="GO" id="GO:0010181">
    <property type="term" value="F:FMN binding"/>
    <property type="evidence" value="ECO:0000250"/>
    <property type="project" value="TAIR"/>
</dbReference>
<dbReference type="GO" id="GO:0004633">
    <property type="term" value="F:phosphopantothenoylcysteine decarboxylase activity"/>
    <property type="evidence" value="ECO:0007669"/>
    <property type="project" value="UniProtKB-EC"/>
</dbReference>
<dbReference type="GO" id="GO:0015937">
    <property type="term" value="P:coenzyme A biosynthetic process"/>
    <property type="evidence" value="ECO:0000315"/>
    <property type="project" value="TAIR"/>
</dbReference>
<dbReference type="GO" id="GO:0042538">
    <property type="term" value="P:hyperosmotic salinity response"/>
    <property type="evidence" value="ECO:0000270"/>
    <property type="project" value="TAIR"/>
</dbReference>
<dbReference type="FunFam" id="3.40.50.1950:FF:000004">
    <property type="entry name" value="Phosphopantothenoylcysteine decarboxylase"/>
    <property type="match status" value="1"/>
</dbReference>
<dbReference type="Gene3D" id="3.40.50.1950">
    <property type="entry name" value="Flavin prenyltransferase-like"/>
    <property type="match status" value="1"/>
</dbReference>
<dbReference type="InterPro" id="IPR036551">
    <property type="entry name" value="Flavin_trans-like"/>
</dbReference>
<dbReference type="InterPro" id="IPR003382">
    <property type="entry name" value="Flavoprotein"/>
</dbReference>
<dbReference type="PANTHER" id="PTHR14359">
    <property type="entry name" value="HOMO-OLIGOMERIC FLAVIN CONTAINING CYS DECARBOXYLASE FAMILY"/>
    <property type="match status" value="1"/>
</dbReference>
<dbReference type="PANTHER" id="PTHR14359:SF6">
    <property type="entry name" value="PHOSPHOPANTOTHENOYLCYSTEINE DECARBOXYLASE"/>
    <property type="match status" value="1"/>
</dbReference>
<dbReference type="Pfam" id="PF02441">
    <property type="entry name" value="Flavoprotein"/>
    <property type="match status" value="1"/>
</dbReference>
<dbReference type="SUPFAM" id="SSF52507">
    <property type="entry name" value="Homo-oligomeric flavin-containing Cys decarboxylases, HFCD"/>
    <property type="match status" value="1"/>
</dbReference>
<protein>
    <recommendedName>
        <fullName>Probable phosphopantothenoylcysteine decarboxylase</fullName>
        <ecNumber>4.1.1.36</ecNumber>
    </recommendedName>
    <alternativeName>
        <fullName>AtCoaC2</fullName>
    </alternativeName>
    <alternativeName>
        <fullName>Halotolerance protein Hal3b</fullName>
        <shortName>AtHal3b</shortName>
    </alternativeName>
</protein>
<organism>
    <name type="scientific">Arabidopsis thaliana</name>
    <name type="common">Mouse-ear cress</name>
    <dbReference type="NCBI Taxonomy" id="3702"/>
    <lineage>
        <taxon>Eukaryota</taxon>
        <taxon>Viridiplantae</taxon>
        <taxon>Streptophyta</taxon>
        <taxon>Embryophyta</taxon>
        <taxon>Tracheophyta</taxon>
        <taxon>Spermatophyta</taxon>
        <taxon>Magnoliopsida</taxon>
        <taxon>eudicotyledons</taxon>
        <taxon>Gunneridae</taxon>
        <taxon>Pentapetalae</taxon>
        <taxon>rosids</taxon>
        <taxon>malvids</taxon>
        <taxon>Brassicales</taxon>
        <taxon>Brassicaceae</taxon>
        <taxon>Camelineae</taxon>
        <taxon>Arabidopsis</taxon>
    </lineage>
</organism>
<evidence type="ECO:0000250" key="1"/>
<evidence type="ECO:0000269" key="2">
    <source>
    </source>
</evidence>
<evidence type="ECO:0000269" key="3">
    <source>
    </source>
</evidence>
<evidence type="ECO:0000305" key="4"/>
<accession>P94063</accession>
<accession>Q9LP62</accession>
<comment type="function">
    <text evidence="3">Involved in plant growth and salt and osmotic tolerance. Catalyzes the decarboxylation of 4'-phosphopantothenoylcysteine to 4'-phosphopantetheine, a key step in coenzyme A biosynthesis. The enzyme is also able to decarboxylate pantothenoylcysteine to pantothenoylcysteamine.</text>
</comment>
<comment type="catalytic activity">
    <reaction>
        <text>N-[(R)-4-phosphopantothenoyl]-L-cysteine + H(+) = (R)-4'-phosphopantetheine + CO2</text>
        <dbReference type="Rhea" id="RHEA:16793"/>
        <dbReference type="ChEBI" id="CHEBI:15378"/>
        <dbReference type="ChEBI" id="CHEBI:16526"/>
        <dbReference type="ChEBI" id="CHEBI:59458"/>
        <dbReference type="ChEBI" id="CHEBI:61723"/>
        <dbReference type="EC" id="4.1.1.36"/>
    </reaction>
</comment>
<comment type="cofactor">
    <cofactor evidence="1">
        <name>FMN</name>
        <dbReference type="ChEBI" id="CHEBI:58210"/>
    </cofactor>
    <text evidence="1">Binds 1 FMN per subunit.</text>
</comment>
<comment type="pathway">
    <text>Cofactor biosynthesis; coenzyme A biosynthesis; CoA from (R)-pantothenate: step 3/5.</text>
</comment>
<comment type="subunit">
    <text evidence="1">Homotrimer.</text>
</comment>
<comment type="tissue specificity">
    <text evidence="2">Expressed in roots, shoots, leaves, flowers, developing siliques and seeds.</text>
</comment>
<comment type="induction">
    <text evidence="2">By salt stress.</text>
</comment>
<comment type="disruption phenotype">
    <text evidence="3">No visible phenotype under normal growth conditions, but homozygous double mutants hal3a-1 and hal3b are embryonic lethal.</text>
</comment>
<comment type="similarity">
    <text evidence="4">Belongs to the HFCD (homooligomeric flavin containing Cys decarboxylase) superfamily.</text>
</comment>
<comment type="caution">
    <text evidence="4">Was previously called At1g48610.</text>
</comment>
<comment type="sequence caution" evidence="4">
    <conflict type="erroneous gene model prediction">
        <sequence resource="EMBL-CDS" id="AAF79709"/>
    </conflict>
    <text>The predicted gene At1g48610 has been split into 2 genes: At1g48605 and At1g48610.</text>
</comment>
<gene>
    <name type="primary">HAL3B</name>
    <name type="synonym">COAC2</name>
    <name type="ordered locus">At1g48605</name>
    <name type="ORF">T1N15.24</name>
    <name type="ORF">T1N15.28</name>
    <name type="ORF">T1N15_21</name>
</gene>
<name>HAL3B_ARATH</name>